<evidence type="ECO:0000255" key="1">
    <source>
        <dbReference type="HAMAP-Rule" id="MF_01351"/>
    </source>
</evidence>
<dbReference type="EC" id="7.1.1.-" evidence="1"/>
<dbReference type="EMBL" id="AE017282">
    <property type="protein sequence ID" value="AAU92582.1"/>
    <property type="molecule type" value="Genomic_DNA"/>
</dbReference>
<dbReference type="RefSeq" id="WP_010960632.1">
    <property type="nucleotide sequence ID" value="NC_002977.6"/>
</dbReference>
<dbReference type="SMR" id="Q608Y4"/>
<dbReference type="STRING" id="243233.MCA1352"/>
<dbReference type="GeneID" id="88223630"/>
<dbReference type="KEGG" id="mca:MCA1352"/>
<dbReference type="eggNOG" id="COG1143">
    <property type="taxonomic scope" value="Bacteria"/>
</dbReference>
<dbReference type="HOGENOM" id="CLU_067218_4_3_6"/>
<dbReference type="Proteomes" id="UP000006821">
    <property type="component" value="Chromosome"/>
</dbReference>
<dbReference type="GO" id="GO:0005886">
    <property type="term" value="C:plasma membrane"/>
    <property type="evidence" value="ECO:0007669"/>
    <property type="project" value="UniProtKB-SubCell"/>
</dbReference>
<dbReference type="GO" id="GO:0051539">
    <property type="term" value="F:4 iron, 4 sulfur cluster binding"/>
    <property type="evidence" value="ECO:0007669"/>
    <property type="project" value="UniProtKB-KW"/>
</dbReference>
<dbReference type="GO" id="GO:0005506">
    <property type="term" value="F:iron ion binding"/>
    <property type="evidence" value="ECO:0007669"/>
    <property type="project" value="UniProtKB-UniRule"/>
</dbReference>
<dbReference type="GO" id="GO:0050136">
    <property type="term" value="F:NADH:ubiquinone reductase (non-electrogenic) activity"/>
    <property type="evidence" value="ECO:0007669"/>
    <property type="project" value="UniProtKB-UniRule"/>
</dbReference>
<dbReference type="GO" id="GO:0048038">
    <property type="term" value="F:quinone binding"/>
    <property type="evidence" value="ECO:0007669"/>
    <property type="project" value="UniProtKB-KW"/>
</dbReference>
<dbReference type="GO" id="GO:0009060">
    <property type="term" value="P:aerobic respiration"/>
    <property type="evidence" value="ECO:0007669"/>
    <property type="project" value="TreeGrafter"/>
</dbReference>
<dbReference type="FunFam" id="3.30.70.3270:FF:000002">
    <property type="entry name" value="NADH-quinone oxidoreductase subunit I"/>
    <property type="match status" value="1"/>
</dbReference>
<dbReference type="Gene3D" id="3.30.70.3270">
    <property type="match status" value="1"/>
</dbReference>
<dbReference type="HAMAP" id="MF_01351">
    <property type="entry name" value="NDH1_NuoI"/>
    <property type="match status" value="1"/>
</dbReference>
<dbReference type="InterPro" id="IPR017896">
    <property type="entry name" value="4Fe4S_Fe-S-bd"/>
</dbReference>
<dbReference type="InterPro" id="IPR017900">
    <property type="entry name" value="4Fe4S_Fe_S_CS"/>
</dbReference>
<dbReference type="InterPro" id="IPR010226">
    <property type="entry name" value="NADH_quinone_OxRdtase_chainI"/>
</dbReference>
<dbReference type="NCBIfam" id="TIGR01971">
    <property type="entry name" value="NuoI"/>
    <property type="match status" value="1"/>
</dbReference>
<dbReference type="NCBIfam" id="NF004536">
    <property type="entry name" value="PRK05888.1-1"/>
    <property type="match status" value="1"/>
</dbReference>
<dbReference type="PANTHER" id="PTHR10849:SF20">
    <property type="entry name" value="NADH DEHYDROGENASE [UBIQUINONE] IRON-SULFUR PROTEIN 8, MITOCHONDRIAL"/>
    <property type="match status" value="1"/>
</dbReference>
<dbReference type="PANTHER" id="PTHR10849">
    <property type="entry name" value="NADH DEHYDROGENASE UBIQUINONE IRON-SULFUR PROTEIN 8, MITOCHONDRIAL"/>
    <property type="match status" value="1"/>
</dbReference>
<dbReference type="Pfam" id="PF12838">
    <property type="entry name" value="Fer4_7"/>
    <property type="match status" value="1"/>
</dbReference>
<dbReference type="SUPFAM" id="SSF54862">
    <property type="entry name" value="4Fe-4S ferredoxins"/>
    <property type="match status" value="1"/>
</dbReference>
<dbReference type="PROSITE" id="PS00198">
    <property type="entry name" value="4FE4S_FER_1"/>
    <property type="match status" value="2"/>
</dbReference>
<dbReference type="PROSITE" id="PS51379">
    <property type="entry name" value="4FE4S_FER_2"/>
    <property type="match status" value="2"/>
</dbReference>
<accession>Q608Y4</accession>
<proteinExistence type="inferred from homology"/>
<reference key="1">
    <citation type="journal article" date="2004" name="PLoS Biol.">
        <title>Genomic insights into methanotrophy: the complete genome sequence of Methylococcus capsulatus (Bath).</title>
        <authorList>
            <person name="Ward N.L."/>
            <person name="Larsen O."/>
            <person name="Sakwa J."/>
            <person name="Bruseth L."/>
            <person name="Khouri H.M."/>
            <person name="Durkin A.S."/>
            <person name="Dimitrov G."/>
            <person name="Jiang L."/>
            <person name="Scanlan D."/>
            <person name="Kang K.H."/>
            <person name="Lewis M.R."/>
            <person name="Nelson K.E."/>
            <person name="Methe B.A."/>
            <person name="Wu M."/>
            <person name="Heidelberg J.F."/>
            <person name="Paulsen I.T."/>
            <person name="Fouts D.E."/>
            <person name="Ravel J."/>
            <person name="Tettelin H."/>
            <person name="Ren Q."/>
            <person name="Read T.D."/>
            <person name="DeBoy R.T."/>
            <person name="Seshadri R."/>
            <person name="Salzberg S.L."/>
            <person name="Jensen H.B."/>
            <person name="Birkeland N.K."/>
            <person name="Nelson W.C."/>
            <person name="Dodson R.J."/>
            <person name="Grindhaug S.H."/>
            <person name="Holt I.E."/>
            <person name="Eidhammer I."/>
            <person name="Jonasen I."/>
            <person name="Vanaken S."/>
            <person name="Utterback T.R."/>
            <person name="Feldblyum T.V."/>
            <person name="Fraser C.M."/>
            <person name="Lillehaug J.R."/>
            <person name="Eisen J.A."/>
        </authorList>
    </citation>
    <scope>NUCLEOTIDE SEQUENCE [LARGE SCALE GENOMIC DNA]</scope>
    <source>
        <strain>ATCC 33009 / NCIMB 11132 / Bath</strain>
    </source>
</reference>
<comment type="function">
    <text evidence="1">NDH-1 shuttles electrons from NADH, via FMN and iron-sulfur (Fe-S) centers, to quinones in the respiratory chain. The immediate electron acceptor for the enzyme in this species is believed to be ubiquinone. Couples the redox reaction to proton translocation (for every two electrons transferred, four hydrogen ions are translocated across the cytoplasmic membrane), and thus conserves the redox energy in a proton gradient.</text>
</comment>
<comment type="catalytic activity">
    <reaction evidence="1">
        <text>a quinone + NADH + 5 H(+)(in) = a quinol + NAD(+) + 4 H(+)(out)</text>
        <dbReference type="Rhea" id="RHEA:57888"/>
        <dbReference type="ChEBI" id="CHEBI:15378"/>
        <dbReference type="ChEBI" id="CHEBI:24646"/>
        <dbReference type="ChEBI" id="CHEBI:57540"/>
        <dbReference type="ChEBI" id="CHEBI:57945"/>
        <dbReference type="ChEBI" id="CHEBI:132124"/>
    </reaction>
</comment>
<comment type="cofactor">
    <cofactor evidence="1">
        <name>[4Fe-4S] cluster</name>
        <dbReference type="ChEBI" id="CHEBI:49883"/>
    </cofactor>
    <text evidence="1">Binds 2 [4Fe-4S] clusters per subunit.</text>
</comment>
<comment type="subunit">
    <text evidence="1">NDH-1 is composed of 14 different subunits. Subunits NuoA, H, J, K, L, M, N constitute the membrane sector of the complex.</text>
</comment>
<comment type="subcellular location">
    <subcellularLocation>
        <location evidence="1">Cell inner membrane</location>
        <topology evidence="1">Peripheral membrane protein</topology>
    </subcellularLocation>
</comment>
<comment type="similarity">
    <text evidence="1">Belongs to the complex I 23 kDa subunit family.</text>
</comment>
<feature type="chain" id="PRO_0000245716" description="NADH-quinone oxidoreductase subunit I">
    <location>
        <begin position="1"/>
        <end position="171"/>
    </location>
</feature>
<feature type="domain" description="4Fe-4S ferredoxin-type 1" evidence="1">
    <location>
        <begin position="41"/>
        <end position="71"/>
    </location>
</feature>
<feature type="domain" description="4Fe-4S ferredoxin-type 2" evidence="1">
    <location>
        <begin position="81"/>
        <end position="110"/>
    </location>
</feature>
<feature type="binding site" evidence="1">
    <location>
        <position position="51"/>
    </location>
    <ligand>
        <name>[4Fe-4S] cluster</name>
        <dbReference type="ChEBI" id="CHEBI:49883"/>
        <label>1</label>
    </ligand>
</feature>
<feature type="binding site" evidence="1">
    <location>
        <position position="54"/>
    </location>
    <ligand>
        <name>[4Fe-4S] cluster</name>
        <dbReference type="ChEBI" id="CHEBI:49883"/>
        <label>1</label>
    </ligand>
</feature>
<feature type="binding site" evidence="1">
    <location>
        <position position="57"/>
    </location>
    <ligand>
        <name>[4Fe-4S] cluster</name>
        <dbReference type="ChEBI" id="CHEBI:49883"/>
        <label>1</label>
    </ligand>
</feature>
<feature type="binding site" evidence="1">
    <location>
        <position position="61"/>
    </location>
    <ligand>
        <name>[4Fe-4S] cluster</name>
        <dbReference type="ChEBI" id="CHEBI:49883"/>
        <label>2</label>
    </ligand>
</feature>
<feature type="binding site" evidence="1">
    <location>
        <position position="90"/>
    </location>
    <ligand>
        <name>[4Fe-4S] cluster</name>
        <dbReference type="ChEBI" id="CHEBI:49883"/>
        <label>2</label>
    </ligand>
</feature>
<feature type="binding site" evidence="1">
    <location>
        <position position="93"/>
    </location>
    <ligand>
        <name>[4Fe-4S] cluster</name>
        <dbReference type="ChEBI" id="CHEBI:49883"/>
        <label>2</label>
    </ligand>
</feature>
<feature type="binding site" evidence="1">
    <location>
        <position position="96"/>
    </location>
    <ligand>
        <name>[4Fe-4S] cluster</name>
        <dbReference type="ChEBI" id="CHEBI:49883"/>
        <label>2</label>
    </ligand>
</feature>
<feature type="binding site" evidence="1">
    <location>
        <position position="100"/>
    </location>
    <ligand>
        <name>[4Fe-4S] cluster</name>
        <dbReference type="ChEBI" id="CHEBI:49883"/>
        <label>1</label>
    </ligand>
</feature>
<name>NUOI_METCA</name>
<organism>
    <name type="scientific">Methylococcus capsulatus (strain ATCC 33009 / NCIMB 11132 / Bath)</name>
    <dbReference type="NCBI Taxonomy" id="243233"/>
    <lineage>
        <taxon>Bacteria</taxon>
        <taxon>Pseudomonadati</taxon>
        <taxon>Pseudomonadota</taxon>
        <taxon>Gammaproteobacteria</taxon>
        <taxon>Methylococcales</taxon>
        <taxon>Methylococcaceae</taxon>
        <taxon>Methylococcus</taxon>
    </lineage>
</organism>
<protein>
    <recommendedName>
        <fullName evidence="1">NADH-quinone oxidoreductase subunit I</fullName>
        <ecNumber evidence="1">7.1.1.-</ecNumber>
    </recommendedName>
    <alternativeName>
        <fullName evidence="1">NADH dehydrogenase I subunit I</fullName>
    </alternativeName>
    <alternativeName>
        <fullName evidence="1">NDH-1 subunit I</fullName>
    </alternativeName>
</protein>
<sequence>MISQLRTLWIVLKHTFSRADTVQYPEQRPKLYPRYRGRIVLTRDPDGEERCVACNLCAAVCPVDCIALQKTEDVDGRWYPEFFRINFSRCILCGLCEEACPTYAIQLTPDFELCEYDRRNLVYEKEHLLIQGTGKYPGYSFYRVAGKAIAGKDKGQAENEAPPIDVHSLLP</sequence>
<gene>
    <name evidence="1" type="primary">nuoI</name>
    <name type="ordered locus">MCA1352</name>
</gene>
<keyword id="KW-0004">4Fe-4S</keyword>
<keyword id="KW-0997">Cell inner membrane</keyword>
<keyword id="KW-1003">Cell membrane</keyword>
<keyword id="KW-0408">Iron</keyword>
<keyword id="KW-0411">Iron-sulfur</keyword>
<keyword id="KW-0472">Membrane</keyword>
<keyword id="KW-0479">Metal-binding</keyword>
<keyword id="KW-0520">NAD</keyword>
<keyword id="KW-0874">Quinone</keyword>
<keyword id="KW-1185">Reference proteome</keyword>
<keyword id="KW-0677">Repeat</keyword>
<keyword id="KW-1278">Translocase</keyword>
<keyword id="KW-0830">Ubiquinone</keyword>